<reference key="1">
    <citation type="submission" date="2007-11" db="EMBL/GenBank/DDBJ databases">
        <title>Complete sequence of chromosome of Shewanella baltica OS195.</title>
        <authorList>
            <consortium name="US DOE Joint Genome Institute"/>
            <person name="Copeland A."/>
            <person name="Lucas S."/>
            <person name="Lapidus A."/>
            <person name="Barry K."/>
            <person name="Glavina del Rio T."/>
            <person name="Dalin E."/>
            <person name="Tice H."/>
            <person name="Pitluck S."/>
            <person name="Chain P."/>
            <person name="Malfatti S."/>
            <person name="Shin M."/>
            <person name="Vergez L."/>
            <person name="Schmutz J."/>
            <person name="Larimer F."/>
            <person name="Land M."/>
            <person name="Hauser L."/>
            <person name="Kyrpides N."/>
            <person name="Kim E."/>
            <person name="Brettar I."/>
            <person name="Rodrigues J."/>
            <person name="Konstantinidis K."/>
            <person name="Klappenbach J."/>
            <person name="Hofle M."/>
            <person name="Tiedje J."/>
            <person name="Richardson P."/>
        </authorList>
    </citation>
    <scope>NUCLEOTIDE SEQUENCE [LARGE SCALE GENOMIC DNA]</scope>
    <source>
        <strain>OS195</strain>
    </source>
</reference>
<evidence type="ECO:0000255" key="1">
    <source>
        <dbReference type="HAMAP-Rule" id="MF_01026"/>
    </source>
</evidence>
<accession>A9KY15</accession>
<dbReference type="EC" id="4.2.1.33" evidence="1"/>
<dbReference type="EMBL" id="CP000891">
    <property type="protein sequence ID" value="ABX47580.1"/>
    <property type="molecule type" value="Genomic_DNA"/>
</dbReference>
<dbReference type="RefSeq" id="WP_006086688.1">
    <property type="nucleotide sequence ID" value="NC_009997.1"/>
</dbReference>
<dbReference type="SMR" id="A9KY15"/>
<dbReference type="GeneID" id="11770738"/>
<dbReference type="KEGG" id="sbn:Sbal195_0399"/>
<dbReference type="HOGENOM" id="CLU_006714_3_4_6"/>
<dbReference type="UniPathway" id="UPA00048">
    <property type="reaction ID" value="UER00071"/>
</dbReference>
<dbReference type="Proteomes" id="UP000000770">
    <property type="component" value="Chromosome"/>
</dbReference>
<dbReference type="GO" id="GO:0003861">
    <property type="term" value="F:3-isopropylmalate dehydratase activity"/>
    <property type="evidence" value="ECO:0007669"/>
    <property type="project" value="UniProtKB-UniRule"/>
</dbReference>
<dbReference type="GO" id="GO:0051539">
    <property type="term" value="F:4 iron, 4 sulfur cluster binding"/>
    <property type="evidence" value="ECO:0007669"/>
    <property type="project" value="UniProtKB-KW"/>
</dbReference>
<dbReference type="GO" id="GO:0046872">
    <property type="term" value="F:metal ion binding"/>
    <property type="evidence" value="ECO:0007669"/>
    <property type="project" value="UniProtKB-KW"/>
</dbReference>
<dbReference type="GO" id="GO:0009098">
    <property type="term" value="P:L-leucine biosynthetic process"/>
    <property type="evidence" value="ECO:0007669"/>
    <property type="project" value="UniProtKB-UniRule"/>
</dbReference>
<dbReference type="CDD" id="cd01583">
    <property type="entry name" value="IPMI"/>
    <property type="match status" value="1"/>
</dbReference>
<dbReference type="FunFam" id="3.30.499.10:FF:000006">
    <property type="entry name" value="3-isopropylmalate dehydratase large subunit"/>
    <property type="match status" value="1"/>
</dbReference>
<dbReference type="FunFam" id="3.30.499.10:FF:000007">
    <property type="entry name" value="3-isopropylmalate dehydratase large subunit"/>
    <property type="match status" value="1"/>
</dbReference>
<dbReference type="Gene3D" id="3.30.499.10">
    <property type="entry name" value="Aconitase, domain 3"/>
    <property type="match status" value="2"/>
</dbReference>
<dbReference type="HAMAP" id="MF_01026">
    <property type="entry name" value="LeuC_type1"/>
    <property type="match status" value="1"/>
</dbReference>
<dbReference type="InterPro" id="IPR004430">
    <property type="entry name" value="3-IsopropMal_deHydase_lsu"/>
</dbReference>
<dbReference type="InterPro" id="IPR015931">
    <property type="entry name" value="Acnase/IPM_dHydase_lsu_aba_1/3"/>
</dbReference>
<dbReference type="InterPro" id="IPR001030">
    <property type="entry name" value="Acoase/IPM_deHydtase_lsu_aba"/>
</dbReference>
<dbReference type="InterPro" id="IPR018136">
    <property type="entry name" value="Aconitase_4Fe-4S_BS"/>
</dbReference>
<dbReference type="InterPro" id="IPR036008">
    <property type="entry name" value="Aconitase_4Fe-4S_dom"/>
</dbReference>
<dbReference type="InterPro" id="IPR050067">
    <property type="entry name" value="IPM_dehydratase_rel_enz"/>
</dbReference>
<dbReference type="InterPro" id="IPR033941">
    <property type="entry name" value="IPMI_cat"/>
</dbReference>
<dbReference type="NCBIfam" id="TIGR00170">
    <property type="entry name" value="leuC"/>
    <property type="match status" value="1"/>
</dbReference>
<dbReference type="NCBIfam" id="NF004016">
    <property type="entry name" value="PRK05478.1"/>
    <property type="match status" value="1"/>
</dbReference>
<dbReference type="NCBIfam" id="NF009116">
    <property type="entry name" value="PRK12466.1"/>
    <property type="match status" value="1"/>
</dbReference>
<dbReference type="PANTHER" id="PTHR43822:SF9">
    <property type="entry name" value="3-ISOPROPYLMALATE DEHYDRATASE"/>
    <property type="match status" value="1"/>
</dbReference>
<dbReference type="PANTHER" id="PTHR43822">
    <property type="entry name" value="HOMOACONITASE, MITOCHONDRIAL-RELATED"/>
    <property type="match status" value="1"/>
</dbReference>
<dbReference type="Pfam" id="PF00330">
    <property type="entry name" value="Aconitase"/>
    <property type="match status" value="1"/>
</dbReference>
<dbReference type="PRINTS" id="PR00415">
    <property type="entry name" value="ACONITASE"/>
</dbReference>
<dbReference type="SUPFAM" id="SSF53732">
    <property type="entry name" value="Aconitase iron-sulfur domain"/>
    <property type="match status" value="1"/>
</dbReference>
<dbReference type="PROSITE" id="PS00450">
    <property type="entry name" value="ACONITASE_1"/>
    <property type="match status" value="1"/>
</dbReference>
<dbReference type="PROSITE" id="PS01244">
    <property type="entry name" value="ACONITASE_2"/>
    <property type="match status" value="1"/>
</dbReference>
<name>LEUC_SHEB9</name>
<proteinExistence type="inferred from homology"/>
<gene>
    <name evidence="1" type="primary">leuC</name>
    <name type="ordered locus">Sbal195_0399</name>
</gene>
<protein>
    <recommendedName>
        <fullName evidence="1">3-isopropylmalate dehydratase large subunit</fullName>
        <ecNumber evidence="1">4.2.1.33</ecNumber>
    </recommendedName>
    <alternativeName>
        <fullName evidence="1">Alpha-IPM isomerase</fullName>
        <shortName evidence="1">IPMI</shortName>
    </alternativeName>
    <alternativeName>
        <fullName evidence="1">Isopropylmalate isomerase</fullName>
    </alternativeName>
</protein>
<feature type="chain" id="PRO_1000084225" description="3-isopropylmalate dehydratase large subunit">
    <location>
        <begin position="1"/>
        <end position="468"/>
    </location>
</feature>
<feature type="binding site" evidence="1">
    <location>
        <position position="349"/>
    </location>
    <ligand>
        <name>[4Fe-4S] cluster</name>
        <dbReference type="ChEBI" id="CHEBI:49883"/>
    </ligand>
</feature>
<feature type="binding site" evidence="1">
    <location>
        <position position="409"/>
    </location>
    <ligand>
        <name>[4Fe-4S] cluster</name>
        <dbReference type="ChEBI" id="CHEBI:49883"/>
    </ligand>
</feature>
<feature type="binding site" evidence="1">
    <location>
        <position position="412"/>
    </location>
    <ligand>
        <name>[4Fe-4S] cluster</name>
        <dbReference type="ChEBI" id="CHEBI:49883"/>
    </ligand>
</feature>
<keyword id="KW-0004">4Fe-4S</keyword>
<keyword id="KW-0028">Amino-acid biosynthesis</keyword>
<keyword id="KW-0100">Branched-chain amino acid biosynthesis</keyword>
<keyword id="KW-0408">Iron</keyword>
<keyword id="KW-0411">Iron-sulfur</keyword>
<keyword id="KW-0432">Leucine biosynthesis</keyword>
<keyword id="KW-0456">Lyase</keyword>
<keyword id="KW-0479">Metal-binding</keyword>
<organism>
    <name type="scientific">Shewanella baltica (strain OS195)</name>
    <dbReference type="NCBI Taxonomy" id="399599"/>
    <lineage>
        <taxon>Bacteria</taxon>
        <taxon>Pseudomonadati</taxon>
        <taxon>Pseudomonadota</taxon>
        <taxon>Gammaproteobacteria</taxon>
        <taxon>Alteromonadales</taxon>
        <taxon>Shewanellaceae</taxon>
        <taxon>Shewanella</taxon>
    </lineage>
</organism>
<comment type="function">
    <text evidence="1">Catalyzes the isomerization between 2-isopropylmalate and 3-isopropylmalate, via the formation of 2-isopropylmaleate.</text>
</comment>
<comment type="catalytic activity">
    <reaction evidence="1">
        <text>(2R,3S)-3-isopropylmalate = (2S)-2-isopropylmalate</text>
        <dbReference type="Rhea" id="RHEA:32287"/>
        <dbReference type="ChEBI" id="CHEBI:1178"/>
        <dbReference type="ChEBI" id="CHEBI:35121"/>
        <dbReference type="EC" id="4.2.1.33"/>
    </reaction>
</comment>
<comment type="cofactor">
    <cofactor evidence="1">
        <name>[4Fe-4S] cluster</name>
        <dbReference type="ChEBI" id="CHEBI:49883"/>
    </cofactor>
    <text evidence="1">Binds 1 [4Fe-4S] cluster per subunit.</text>
</comment>
<comment type="pathway">
    <text evidence="1">Amino-acid biosynthesis; L-leucine biosynthesis; L-leucine from 3-methyl-2-oxobutanoate: step 2/4.</text>
</comment>
<comment type="subunit">
    <text evidence="1">Heterodimer of LeuC and LeuD.</text>
</comment>
<comment type="similarity">
    <text evidence="1">Belongs to the aconitase/IPM isomerase family. LeuC type 1 subfamily.</text>
</comment>
<sequence length="468" mass="49761">MTNAKTLYQKVWDAHIVAAPEGEAPVIYVDRHLVHEVTSPQAFSGLKVAGRKLRAPEKTFATMDHNTSTRSASLDALSPMARTQVETLAQNCKDFGVRLYDIHHPNQGIVHVMGPELGITLPGTVIVCGDSHTATHGAFGALAFGIGTSEVEHVLATQTLRQLKAKTMKIEVRGHVTDGVTAKDIVLAIIGKIGMDGGTGYVVEFCGEAIEALSMEGRMTVCNMAIEMGAKAGMVAPDQTTFDYLAGREFAPKGEDWAEAVAYWKAIKTDDGAVFDAIVELDAADIAPQLTWGTNPGQVVAIDGKVPDPINEANPSTRASMEKALEYIGLSAGTPMTDISINKVFIGSCTNSRIEDLRSAAVHAKGRKVASGVTAIVVPGSGQVKAQAEAEGLDKIFIEAGFEWRLPGCSMCLAMNDDRLEAGDRCASTSNRNFEGRQGRGSRTHLVSPAMAAAAAVAGHFVDIRKPY</sequence>